<keyword id="KW-0131">Cell cycle</keyword>
<keyword id="KW-0132">Cell division</keyword>
<keyword id="KW-0238">DNA-binding</keyword>
<keyword id="KW-1185">Reference proteome</keyword>
<reference key="1">
    <citation type="journal article" date="2009" name="Genome Res.">
        <title>Complete genome of the cellulolytic thermophile Acidothermus cellulolyticus 11B provides insights into its ecophysiological and evolutionary adaptations.</title>
        <authorList>
            <person name="Barabote R.D."/>
            <person name="Xie G."/>
            <person name="Leu D.H."/>
            <person name="Normand P."/>
            <person name="Necsulea A."/>
            <person name="Daubin V."/>
            <person name="Medigue C."/>
            <person name="Adney W.S."/>
            <person name="Xu X.C."/>
            <person name="Lapidus A."/>
            <person name="Parales R.E."/>
            <person name="Detter C."/>
            <person name="Pujic P."/>
            <person name="Bruce D."/>
            <person name="Lavire C."/>
            <person name="Challacombe J.F."/>
            <person name="Brettin T.S."/>
            <person name="Berry A.M."/>
        </authorList>
    </citation>
    <scope>NUCLEOTIDE SEQUENCE [LARGE SCALE GENOMIC DNA]</scope>
    <source>
        <strain>ATCC 43068 / DSM 8971 / 11B</strain>
    </source>
</reference>
<accession>A0LTX5</accession>
<feature type="chain" id="PRO_0000376419" description="Probable cell division protein WhiA">
    <location>
        <begin position="1"/>
        <end position="324"/>
    </location>
</feature>
<feature type="DNA-binding region" description="H-T-H motif" evidence="1">
    <location>
        <begin position="275"/>
        <end position="308"/>
    </location>
</feature>
<comment type="function">
    <text evidence="1">Involved in cell division and chromosome segregation.</text>
</comment>
<comment type="similarity">
    <text evidence="1">Belongs to the WhiA family.</text>
</comment>
<evidence type="ECO:0000255" key="1">
    <source>
        <dbReference type="HAMAP-Rule" id="MF_01420"/>
    </source>
</evidence>
<gene>
    <name evidence="1" type="primary">whiA</name>
    <name type="ordered locus">Acel_1113</name>
</gene>
<organism>
    <name type="scientific">Acidothermus cellulolyticus (strain ATCC 43068 / DSM 8971 / 11B)</name>
    <dbReference type="NCBI Taxonomy" id="351607"/>
    <lineage>
        <taxon>Bacteria</taxon>
        <taxon>Bacillati</taxon>
        <taxon>Actinomycetota</taxon>
        <taxon>Actinomycetes</taxon>
        <taxon>Acidothermales</taxon>
        <taxon>Acidothermaceae</taxon>
        <taxon>Acidothermus</taxon>
    </lineage>
</organism>
<name>WHIA_ACIC1</name>
<sequence>MALTAKVKDELARLPVTKTCCRKAEVAATLRFAGGLHLVGGRIVVEAELDTGAAARRLRTALAELYGQHAELAVIAPGGLHRGNRYVVRVSRDGETLAKQTGLLDGRGRPVRGLPSQIVSGGVCDAAAAWRGAFLAHGSLTEPGRGCTLEVSCPGPESALALVGAARRLGVQAKSREVRGVERVVVRDGDAIGVLLTRLGAHDSVLAWEEYRVRREVRATANRLANFDDANVRRSARAAVTAAAKVKRALEILGDSVPEHLAAAGTLRMVHPQVSLEELGALADPPLTKDAIAGRIRRLIAMADRRADELGIPGTEAALVGELP</sequence>
<dbReference type="EMBL" id="CP000481">
    <property type="protein sequence ID" value="ABK52885.1"/>
    <property type="molecule type" value="Genomic_DNA"/>
</dbReference>
<dbReference type="RefSeq" id="WP_011719948.1">
    <property type="nucleotide sequence ID" value="NC_008578.1"/>
</dbReference>
<dbReference type="SMR" id="A0LTX5"/>
<dbReference type="FunCoup" id="A0LTX5">
    <property type="interactions" value="2"/>
</dbReference>
<dbReference type="STRING" id="351607.Acel_1113"/>
<dbReference type="KEGG" id="ace:Acel_1113"/>
<dbReference type="eggNOG" id="COG1481">
    <property type="taxonomic scope" value="Bacteria"/>
</dbReference>
<dbReference type="HOGENOM" id="CLU_053282_0_0_11"/>
<dbReference type="InParanoid" id="A0LTX5"/>
<dbReference type="OrthoDB" id="5197218at2"/>
<dbReference type="Proteomes" id="UP000008221">
    <property type="component" value="Chromosome"/>
</dbReference>
<dbReference type="GO" id="GO:0003677">
    <property type="term" value="F:DNA binding"/>
    <property type="evidence" value="ECO:0007669"/>
    <property type="project" value="UniProtKB-UniRule"/>
</dbReference>
<dbReference type="GO" id="GO:0051301">
    <property type="term" value="P:cell division"/>
    <property type="evidence" value="ECO:0007669"/>
    <property type="project" value="UniProtKB-UniRule"/>
</dbReference>
<dbReference type="GO" id="GO:0043937">
    <property type="term" value="P:regulation of sporulation"/>
    <property type="evidence" value="ECO:0007669"/>
    <property type="project" value="InterPro"/>
</dbReference>
<dbReference type="FunFam" id="3.10.28.10:FF:000001">
    <property type="entry name" value="Probable cell division protein WhiA"/>
    <property type="match status" value="1"/>
</dbReference>
<dbReference type="Gene3D" id="3.10.28.10">
    <property type="entry name" value="Homing endonucleases"/>
    <property type="match status" value="1"/>
</dbReference>
<dbReference type="HAMAP" id="MF_01420">
    <property type="entry name" value="HTH_type_WhiA"/>
    <property type="match status" value="1"/>
</dbReference>
<dbReference type="InterPro" id="IPR027434">
    <property type="entry name" value="Homing_endonucl"/>
</dbReference>
<dbReference type="InterPro" id="IPR018478">
    <property type="entry name" value="Sporu_reg_WhiA_N_dom"/>
</dbReference>
<dbReference type="InterPro" id="IPR003802">
    <property type="entry name" value="Sporulation_regulator_WhiA"/>
</dbReference>
<dbReference type="InterPro" id="IPR023054">
    <property type="entry name" value="Sporulation_regulator_WhiA_C"/>
</dbReference>
<dbReference type="InterPro" id="IPR039518">
    <property type="entry name" value="WhiA_LAGLIDADG_dom"/>
</dbReference>
<dbReference type="NCBIfam" id="TIGR00647">
    <property type="entry name" value="DNA_bind_WhiA"/>
    <property type="match status" value="1"/>
</dbReference>
<dbReference type="PANTHER" id="PTHR37307">
    <property type="entry name" value="CELL DIVISION PROTEIN WHIA-RELATED"/>
    <property type="match status" value="1"/>
</dbReference>
<dbReference type="PANTHER" id="PTHR37307:SF1">
    <property type="entry name" value="CELL DIVISION PROTEIN WHIA-RELATED"/>
    <property type="match status" value="1"/>
</dbReference>
<dbReference type="Pfam" id="PF02650">
    <property type="entry name" value="HTH_WhiA"/>
    <property type="match status" value="1"/>
</dbReference>
<dbReference type="Pfam" id="PF14527">
    <property type="entry name" value="LAGLIDADG_WhiA"/>
    <property type="match status" value="1"/>
</dbReference>
<dbReference type="Pfam" id="PF10298">
    <property type="entry name" value="WhiA_N"/>
    <property type="match status" value="1"/>
</dbReference>
<protein>
    <recommendedName>
        <fullName evidence="1">Probable cell division protein WhiA</fullName>
    </recommendedName>
</protein>
<proteinExistence type="inferred from homology"/>